<name>RS3_RICAE</name>
<sequence>MGQKVCAHGFRVGPTLIKGWDSILYAEKHYKTLFIQDLKIRDLINKGFNQAQISRVLIERPSNKSIIININAKKPNIIIGRNGSEIDKLKKAIEKMTSLKEVYINIHEVRKFNIDAAIVAQTIALQLEKRVSFRKAMKTAIQASFKQGGQGIRVSCSGRLGGAEIARTEWYIEGRMPLHTLRADIDYSTAEAITTYGVIGVKVWIYKGEYTENKRYN</sequence>
<keyword id="KW-0687">Ribonucleoprotein</keyword>
<keyword id="KW-0689">Ribosomal protein</keyword>
<keyword id="KW-0694">RNA-binding</keyword>
<keyword id="KW-0699">rRNA-binding</keyword>
<organism>
    <name type="scientific">Rickettsia africae (strain ESF-5)</name>
    <dbReference type="NCBI Taxonomy" id="347255"/>
    <lineage>
        <taxon>Bacteria</taxon>
        <taxon>Pseudomonadati</taxon>
        <taxon>Pseudomonadota</taxon>
        <taxon>Alphaproteobacteria</taxon>
        <taxon>Rickettsiales</taxon>
        <taxon>Rickettsiaceae</taxon>
        <taxon>Rickettsieae</taxon>
        <taxon>Rickettsia</taxon>
        <taxon>spotted fever group</taxon>
    </lineage>
</organism>
<feature type="chain" id="PRO_1000214348" description="Small ribosomal subunit protein uS3">
    <location>
        <begin position="1"/>
        <end position="217"/>
    </location>
</feature>
<feature type="domain" description="KH type-2" evidence="1">
    <location>
        <begin position="40"/>
        <end position="110"/>
    </location>
</feature>
<accession>C3PPA1</accession>
<reference key="1">
    <citation type="journal article" date="2009" name="BMC Genomics">
        <title>Analysis of the Rickettsia africae genome reveals that virulence acquisition in Rickettsia species may be explained by genome reduction.</title>
        <authorList>
            <person name="Fournier P.-E."/>
            <person name="El Karkouri K."/>
            <person name="Leroy Q."/>
            <person name="Robert C."/>
            <person name="Giumelli B."/>
            <person name="Renesto P."/>
            <person name="Socolovschi C."/>
            <person name="Parola P."/>
            <person name="Audic S."/>
            <person name="Raoult D."/>
        </authorList>
    </citation>
    <scope>NUCLEOTIDE SEQUENCE [LARGE SCALE GENOMIC DNA]</scope>
    <source>
        <strain>ESF-5</strain>
    </source>
</reference>
<evidence type="ECO:0000255" key="1">
    <source>
        <dbReference type="HAMAP-Rule" id="MF_01309"/>
    </source>
</evidence>
<evidence type="ECO:0000305" key="2"/>
<dbReference type="EMBL" id="CP001612">
    <property type="protein sequence ID" value="ACP53761.1"/>
    <property type="molecule type" value="Genomic_DNA"/>
</dbReference>
<dbReference type="RefSeq" id="WP_010977584.1">
    <property type="nucleotide sequence ID" value="NC_012633.1"/>
</dbReference>
<dbReference type="SMR" id="C3PPA1"/>
<dbReference type="GeneID" id="928142"/>
<dbReference type="KEGG" id="raf:RAF_ORF0906"/>
<dbReference type="HOGENOM" id="CLU_058591_0_2_5"/>
<dbReference type="Proteomes" id="UP000002305">
    <property type="component" value="Chromosome"/>
</dbReference>
<dbReference type="GO" id="GO:0022627">
    <property type="term" value="C:cytosolic small ribosomal subunit"/>
    <property type="evidence" value="ECO:0007669"/>
    <property type="project" value="TreeGrafter"/>
</dbReference>
<dbReference type="GO" id="GO:0003729">
    <property type="term" value="F:mRNA binding"/>
    <property type="evidence" value="ECO:0007669"/>
    <property type="project" value="UniProtKB-UniRule"/>
</dbReference>
<dbReference type="GO" id="GO:0019843">
    <property type="term" value="F:rRNA binding"/>
    <property type="evidence" value="ECO:0007669"/>
    <property type="project" value="UniProtKB-UniRule"/>
</dbReference>
<dbReference type="GO" id="GO:0003735">
    <property type="term" value="F:structural constituent of ribosome"/>
    <property type="evidence" value="ECO:0007669"/>
    <property type="project" value="InterPro"/>
</dbReference>
<dbReference type="GO" id="GO:0006412">
    <property type="term" value="P:translation"/>
    <property type="evidence" value="ECO:0007669"/>
    <property type="project" value="UniProtKB-UniRule"/>
</dbReference>
<dbReference type="CDD" id="cd02412">
    <property type="entry name" value="KH-II_30S_S3"/>
    <property type="match status" value="1"/>
</dbReference>
<dbReference type="FunFam" id="3.30.300.20:FF:000001">
    <property type="entry name" value="30S ribosomal protein S3"/>
    <property type="match status" value="1"/>
</dbReference>
<dbReference type="Gene3D" id="3.30.300.20">
    <property type="match status" value="1"/>
</dbReference>
<dbReference type="Gene3D" id="3.30.1140.32">
    <property type="entry name" value="Ribosomal protein S3, C-terminal domain"/>
    <property type="match status" value="1"/>
</dbReference>
<dbReference type="HAMAP" id="MF_01309_B">
    <property type="entry name" value="Ribosomal_uS3_B"/>
    <property type="match status" value="1"/>
</dbReference>
<dbReference type="InterPro" id="IPR004087">
    <property type="entry name" value="KH_dom"/>
</dbReference>
<dbReference type="InterPro" id="IPR015946">
    <property type="entry name" value="KH_dom-like_a/b"/>
</dbReference>
<dbReference type="InterPro" id="IPR004044">
    <property type="entry name" value="KH_dom_type_2"/>
</dbReference>
<dbReference type="InterPro" id="IPR009019">
    <property type="entry name" value="KH_sf_prok-type"/>
</dbReference>
<dbReference type="InterPro" id="IPR036419">
    <property type="entry name" value="Ribosomal_S3_C_sf"/>
</dbReference>
<dbReference type="InterPro" id="IPR005704">
    <property type="entry name" value="Ribosomal_uS3_bac-typ"/>
</dbReference>
<dbReference type="InterPro" id="IPR001351">
    <property type="entry name" value="Ribosomal_uS3_C"/>
</dbReference>
<dbReference type="InterPro" id="IPR018280">
    <property type="entry name" value="Ribosomal_uS3_CS"/>
</dbReference>
<dbReference type="NCBIfam" id="TIGR01009">
    <property type="entry name" value="rpsC_bact"/>
    <property type="match status" value="1"/>
</dbReference>
<dbReference type="PANTHER" id="PTHR11760">
    <property type="entry name" value="30S/40S RIBOSOMAL PROTEIN S3"/>
    <property type="match status" value="1"/>
</dbReference>
<dbReference type="PANTHER" id="PTHR11760:SF19">
    <property type="entry name" value="SMALL RIBOSOMAL SUBUNIT PROTEIN US3C"/>
    <property type="match status" value="1"/>
</dbReference>
<dbReference type="Pfam" id="PF07650">
    <property type="entry name" value="KH_2"/>
    <property type="match status" value="1"/>
</dbReference>
<dbReference type="Pfam" id="PF00189">
    <property type="entry name" value="Ribosomal_S3_C"/>
    <property type="match status" value="1"/>
</dbReference>
<dbReference type="SMART" id="SM00322">
    <property type="entry name" value="KH"/>
    <property type="match status" value="1"/>
</dbReference>
<dbReference type="SUPFAM" id="SSF54814">
    <property type="entry name" value="Prokaryotic type KH domain (KH-domain type II)"/>
    <property type="match status" value="1"/>
</dbReference>
<dbReference type="SUPFAM" id="SSF54821">
    <property type="entry name" value="Ribosomal protein S3 C-terminal domain"/>
    <property type="match status" value="1"/>
</dbReference>
<dbReference type="PROSITE" id="PS50823">
    <property type="entry name" value="KH_TYPE_2"/>
    <property type="match status" value="1"/>
</dbReference>
<dbReference type="PROSITE" id="PS00548">
    <property type="entry name" value="RIBOSOMAL_S3"/>
    <property type="match status" value="1"/>
</dbReference>
<protein>
    <recommendedName>
        <fullName evidence="1">Small ribosomal subunit protein uS3</fullName>
    </recommendedName>
    <alternativeName>
        <fullName evidence="2">30S ribosomal protein S3</fullName>
    </alternativeName>
</protein>
<gene>
    <name evidence="1" type="primary">rpsC</name>
    <name type="ordered locus">RAF_ORF0906</name>
</gene>
<comment type="function">
    <text evidence="1">Binds the lower part of the 30S subunit head. Binds mRNA in the 70S ribosome, positioning it for translation.</text>
</comment>
<comment type="subunit">
    <text evidence="1">Part of the 30S ribosomal subunit. Forms a tight complex with proteins S10 and S14.</text>
</comment>
<comment type="similarity">
    <text evidence="1">Belongs to the universal ribosomal protein uS3 family.</text>
</comment>
<proteinExistence type="inferred from homology"/>